<feature type="chain" id="PRO_1000069911" description="Chromosome partition protein MukB">
    <location>
        <begin position="1"/>
        <end position="1482"/>
    </location>
</feature>
<feature type="region of interest" description="Flexible hinge" evidence="1">
    <location>
        <begin position="666"/>
        <end position="783"/>
    </location>
</feature>
<feature type="coiled-coil region" evidence="1">
    <location>
        <begin position="337"/>
        <end position="468"/>
    </location>
</feature>
<feature type="coiled-coil region" evidence="1">
    <location>
        <begin position="509"/>
        <end position="604"/>
    </location>
</feature>
<feature type="coiled-coil region" evidence="1">
    <location>
        <begin position="780"/>
        <end position="805"/>
    </location>
</feature>
<feature type="coiled-coil region" evidence="1">
    <location>
        <begin position="835"/>
        <end position="1044"/>
    </location>
</feature>
<feature type="coiled-coil region" evidence="1">
    <location>
        <begin position="1070"/>
        <end position="1115"/>
    </location>
</feature>
<feature type="coiled-coil region" evidence="1">
    <location>
        <begin position="1210"/>
        <end position="1265"/>
    </location>
</feature>
<feature type="binding site" evidence="1">
    <location>
        <begin position="34"/>
        <end position="41"/>
    </location>
    <ligand>
        <name>ATP</name>
        <dbReference type="ChEBI" id="CHEBI:30616"/>
    </ligand>
</feature>
<reference key="1">
    <citation type="submission" date="2007-09" db="EMBL/GenBank/DDBJ databases">
        <title>Complete sequence of chromosome of Serratia proteamaculans 568.</title>
        <authorList>
            <consortium name="US DOE Joint Genome Institute"/>
            <person name="Copeland A."/>
            <person name="Lucas S."/>
            <person name="Lapidus A."/>
            <person name="Barry K."/>
            <person name="Glavina del Rio T."/>
            <person name="Dalin E."/>
            <person name="Tice H."/>
            <person name="Pitluck S."/>
            <person name="Chain P."/>
            <person name="Malfatti S."/>
            <person name="Shin M."/>
            <person name="Vergez L."/>
            <person name="Schmutz J."/>
            <person name="Larimer F."/>
            <person name="Land M."/>
            <person name="Hauser L."/>
            <person name="Kyrpides N."/>
            <person name="Kim E."/>
            <person name="Taghavi S."/>
            <person name="Newman L."/>
            <person name="Vangronsveld J."/>
            <person name="van der Lelie D."/>
            <person name="Richardson P."/>
        </authorList>
    </citation>
    <scope>NUCLEOTIDE SEQUENCE [LARGE SCALE GENOMIC DNA]</scope>
    <source>
        <strain>568</strain>
    </source>
</reference>
<keyword id="KW-0067">ATP-binding</keyword>
<keyword id="KW-0131">Cell cycle</keyword>
<keyword id="KW-0132">Cell division</keyword>
<keyword id="KW-0159">Chromosome partition</keyword>
<keyword id="KW-0175">Coiled coil</keyword>
<keyword id="KW-0963">Cytoplasm</keyword>
<keyword id="KW-0226">DNA condensation</keyword>
<keyword id="KW-0238">DNA-binding</keyword>
<keyword id="KW-0547">Nucleotide-binding</keyword>
<proteinExistence type="inferred from homology"/>
<dbReference type="EMBL" id="CP000826">
    <property type="protein sequence ID" value="ABV40829.1"/>
    <property type="molecule type" value="Genomic_DNA"/>
</dbReference>
<dbReference type="SMR" id="A8GCI9"/>
<dbReference type="STRING" id="399741.Spro_1725"/>
<dbReference type="KEGG" id="spe:Spro_1725"/>
<dbReference type="eggNOG" id="COG3096">
    <property type="taxonomic scope" value="Bacteria"/>
</dbReference>
<dbReference type="HOGENOM" id="CLU_004430_0_0_6"/>
<dbReference type="OrthoDB" id="6722439at2"/>
<dbReference type="GO" id="GO:0005737">
    <property type="term" value="C:cytoplasm"/>
    <property type="evidence" value="ECO:0007669"/>
    <property type="project" value="UniProtKB-UniRule"/>
</dbReference>
<dbReference type="GO" id="GO:0009295">
    <property type="term" value="C:nucleoid"/>
    <property type="evidence" value="ECO:0007669"/>
    <property type="project" value="UniProtKB-SubCell"/>
</dbReference>
<dbReference type="GO" id="GO:0005524">
    <property type="term" value="F:ATP binding"/>
    <property type="evidence" value="ECO:0007669"/>
    <property type="project" value="UniProtKB-UniRule"/>
</dbReference>
<dbReference type="GO" id="GO:0003677">
    <property type="term" value="F:DNA binding"/>
    <property type="evidence" value="ECO:0007669"/>
    <property type="project" value="UniProtKB-UniRule"/>
</dbReference>
<dbReference type="GO" id="GO:0051301">
    <property type="term" value="P:cell division"/>
    <property type="evidence" value="ECO:0007669"/>
    <property type="project" value="UniProtKB-KW"/>
</dbReference>
<dbReference type="GO" id="GO:0030261">
    <property type="term" value="P:chromosome condensation"/>
    <property type="evidence" value="ECO:0007669"/>
    <property type="project" value="UniProtKB-KW"/>
</dbReference>
<dbReference type="GO" id="GO:0007059">
    <property type="term" value="P:chromosome segregation"/>
    <property type="evidence" value="ECO:0007669"/>
    <property type="project" value="UniProtKB-UniRule"/>
</dbReference>
<dbReference type="GO" id="GO:0006260">
    <property type="term" value="P:DNA replication"/>
    <property type="evidence" value="ECO:0007669"/>
    <property type="project" value="UniProtKB-UniRule"/>
</dbReference>
<dbReference type="FunFam" id="3.40.1140.10:FF:000001">
    <property type="entry name" value="Chromosome partition protein MukB"/>
    <property type="match status" value="1"/>
</dbReference>
<dbReference type="FunFam" id="3.40.1140.10:FF:000002">
    <property type="entry name" value="Chromosome partition protein MukB"/>
    <property type="match status" value="1"/>
</dbReference>
<dbReference type="Gene3D" id="1.10.287.1490">
    <property type="match status" value="1"/>
</dbReference>
<dbReference type="Gene3D" id="1.20.58.850">
    <property type="match status" value="1"/>
</dbReference>
<dbReference type="Gene3D" id="3.40.1140.10">
    <property type="match status" value="2"/>
</dbReference>
<dbReference type="Gene3D" id="1.20.5.420">
    <property type="entry name" value="Immunoglobulin FC, subunit C"/>
    <property type="match status" value="1"/>
</dbReference>
<dbReference type="Gene3D" id="3.30.70.3500">
    <property type="entry name" value="MukB, hinge domain"/>
    <property type="match status" value="1"/>
</dbReference>
<dbReference type="HAMAP" id="MF_01800">
    <property type="entry name" value="MukB"/>
    <property type="match status" value="1"/>
</dbReference>
<dbReference type="InterPro" id="IPR012090">
    <property type="entry name" value="MukB"/>
</dbReference>
<dbReference type="InterPro" id="IPR050308">
    <property type="entry name" value="MukB/SMC"/>
</dbReference>
<dbReference type="InterPro" id="IPR032520">
    <property type="entry name" value="MukB_hinge"/>
</dbReference>
<dbReference type="InterPro" id="IPR042501">
    <property type="entry name" value="MukB_hinge_sf"/>
</dbReference>
<dbReference type="InterPro" id="IPR007406">
    <property type="entry name" value="MukB_N_dom"/>
</dbReference>
<dbReference type="InterPro" id="IPR027417">
    <property type="entry name" value="P-loop_NTPase"/>
</dbReference>
<dbReference type="NCBIfam" id="NF003422">
    <property type="entry name" value="PRK04863.1"/>
    <property type="match status" value="1"/>
</dbReference>
<dbReference type="PANTHER" id="PTHR42963">
    <property type="entry name" value="CHROMOSOME PARTITION PROTEIN MUKB"/>
    <property type="match status" value="1"/>
</dbReference>
<dbReference type="PANTHER" id="PTHR42963:SF1">
    <property type="entry name" value="DUF4476 DOMAIN-CONTAINING PROTEIN"/>
    <property type="match status" value="1"/>
</dbReference>
<dbReference type="Pfam" id="PF04310">
    <property type="entry name" value="MukB"/>
    <property type="match status" value="1"/>
</dbReference>
<dbReference type="Pfam" id="PF16330">
    <property type="entry name" value="MukB_hinge"/>
    <property type="match status" value="1"/>
</dbReference>
<dbReference type="Pfam" id="PF13558">
    <property type="entry name" value="SbcC_Walker_B"/>
    <property type="match status" value="1"/>
</dbReference>
<dbReference type="PIRSF" id="PIRSF005246">
    <property type="entry name" value="MukB"/>
    <property type="match status" value="1"/>
</dbReference>
<dbReference type="SUPFAM" id="SSF52540">
    <property type="entry name" value="P-loop containing nucleoside triphosphate hydrolases"/>
    <property type="match status" value="2"/>
</dbReference>
<evidence type="ECO:0000255" key="1">
    <source>
        <dbReference type="HAMAP-Rule" id="MF_01800"/>
    </source>
</evidence>
<gene>
    <name evidence="1" type="primary">mukB</name>
    <name type="ordered locus">Spro_1725</name>
</gene>
<sequence>MIERGKFRSLTLVNWNGFFARTFDLDELVTTLSGGNGAGKSTTMAAFVTALIPDLTLLHFRNTTEAGATSGSRDKGLHGKLRAGVCYSTLDVLNSRHQRVVVGVRLQQVAGRDRKVDIKPFVIQGLPTAVQPTELLTQTVGERQARVLSLQELKDRVEEMEGVQFKQFNSITDYHSLMFDLGVIPKRLRSSSDRSKFYRLIEASLYGGISSAITRSLRDYLLPENSGVRKAFQDMEAALRENRMTLEAIRVTQSDRDLFKHLISEATSYVAADYMRHANERRIHLDGALALRNDLLGSRKQLAAEQYRHVEMARELAEQSGAESDLETDYQAASDHLNLVQTAMRQQEKIERYEGDLEELTYRLEEQNEVVAEASEQQAENEARAEAAELEVDELKSQLADYQQALDVQQTRAIQYQQALQALDRARTLCQLPELTAENAEHWLDTFQAREQEATEALLMLEQKLSVADAAHGQFEQAYQLVGKIAGQVSRSEAWQCARELLRDWPSQQHLAERVQPLRMRLSELEQRLRSQQDAERLLQEFCKRHGQQYQPDELDALQQELEERLESLSQGVSDAGERRMEMRQELEQIQQRIRELTTRAPIWLAAQDALSQLGEQSGEALESSQQVTEYMQQLLERERETTVERDEVAAGKRAVEAQIERLSQPGGAEDQRLVTLAERFGGVLLSEIYDDVTIDDAPYFSALYGPSRHAIVVPDLSLVREMLEGLEDCPEDLYLIEGDPQSFDDSVFAVEEQDRAVLVKTAERQWRYSRYPAVPLFGRAARENRLEILHAEREKLAERYATLSFDVQKTQRSHQAFSRFIGNHLAVAFDADPEAEIRGLNTRRGEIERALNNHEAQNQQQRQQYDQAKEGISALNRLTPLVSLLNDETLQDRVEEIREELEEAQDAARHIQQHGVSLTKLEPLLSVLQSDPQQHEQLQQDYTQAQSVQRQAKQQAFALIEVVQRRAHFSYTDSAGMQNANNDLNDKLRQRLEHAEAERTRAREQLRQYQTQFTQYSQVLASLKSSYDAKRDMLKELSQELVDIGVQADANAEARARTRRDELHAGLSTNRARRNQLEKQLTFCEAEMDSLQKKLRKLERDYYQLREQVVTAKAGWCAVMRLVKDNGVERRLHRRELAYMDGDELRSMSDKALGALRLAVSDNEHLRDVLRLSEDPKRPERKIQFYIAVYQHLRERIRQDIIRTDDPVEAIEQMEIELGRLTEELTAREQKLAISSKSVANIIRKTIQREQNRIRMLNQGLQAVSFGQVKSVRLNVNVREAHATLLDVLSEQQEQHQDLFNSNRLTFSEALAKLYQRLNPQIDMGQRTPQTIGEELLDYRNYLELEVEVFRGSDGWLRAESGALSTGEAIGTGMSILVMVVQSWEEESRRLRGKDISPCRLLFLDEAARLDAKSIATLFELCDRLEMQLIIAAPENISPEKGTTYKLVRKVFQNHEHVHVVGLRGFANEPPVLGVTAAETP</sequence>
<organism>
    <name type="scientific">Serratia proteamaculans (strain 568)</name>
    <dbReference type="NCBI Taxonomy" id="399741"/>
    <lineage>
        <taxon>Bacteria</taxon>
        <taxon>Pseudomonadati</taxon>
        <taxon>Pseudomonadota</taxon>
        <taxon>Gammaproteobacteria</taxon>
        <taxon>Enterobacterales</taxon>
        <taxon>Yersiniaceae</taxon>
        <taxon>Serratia</taxon>
    </lineage>
</organism>
<protein>
    <recommendedName>
        <fullName evidence="1">Chromosome partition protein MukB</fullName>
    </recommendedName>
    <alternativeName>
        <fullName evidence="1">Structural maintenance of chromosome-related protein</fullName>
    </alternativeName>
</protein>
<name>MUKB_SERP5</name>
<comment type="function">
    <text evidence="1">Plays a central role in chromosome condensation, segregation and cell cycle progression. Functions as a homodimer, which is essential for chromosome partition. Involved in negative DNA supercoiling in vivo, and by this means organize and compact chromosomes. May achieve or facilitate chromosome segregation by condensation DNA from both sides of a centrally located replisome during cell division.</text>
</comment>
<comment type="subunit">
    <text evidence="1">Homodimerization via its hinge domain. Binds to DNA via its C-terminal region. Interacts, and probably forms a ternary complex, with MukE and MukF via its C-terminal region. The complex formation is stimulated by calcium or magnesium. Interacts with tubulin-related protein FtsZ.</text>
</comment>
<comment type="subcellular location">
    <subcellularLocation>
        <location evidence="1">Cytoplasm</location>
        <location evidence="1">Nucleoid</location>
    </subcellularLocation>
    <text evidence="1">Restricted to the nucleoid region.</text>
</comment>
<comment type="domain">
    <text evidence="1">The hinge domain, which separates the large intramolecular coiled coil regions, allows the homodimerization, forming a V-shaped homodimer.</text>
</comment>
<comment type="similarity">
    <text evidence="1">Belongs to the SMC family. MukB subfamily.</text>
</comment>
<accession>A8GCI9</accession>